<accession>Q15464</accession>
<accession>B9EGM0</accession>
<accession>D3DRQ5</accession>
<accession>Q504U5</accession>
<accession>Q5VUM8</accession>
<evidence type="ECO:0000250" key="1"/>
<evidence type="ECO:0000255" key="2">
    <source>
        <dbReference type="PROSITE-ProRule" id="PRU00191"/>
    </source>
</evidence>
<evidence type="ECO:0000256" key="3">
    <source>
        <dbReference type="SAM" id="MobiDB-lite"/>
    </source>
</evidence>
<evidence type="ECO:0000269" key="4">
    <source>
    </source>
</evidence>
<evidence type="ECO:0000269" key="5">
    <source>
    </source>
</evidence>
<evidence type="ECO:0000269" key="6">
    <source>
    </source>
</evidence>
<evidence type="ECO:0000269" key="7">
    <source>
    </source>
</evidence>
<evidence type="ECO:0000269" key="8">
    <source>
    </source>
</evidence>
<evidence type="ECO:0000269" key="9">
    <source>
    </source>
</evidence>
<evidence type="ECO:0000269" key="10">
    <source>
    </source>
</evidence>
<evidence type="ECO:0000269" key="11">
    <source>
    </source>
</evidence>
<evidence type="ECO:0000269" key="12">
    <source>
    </source>
</evidence>
<evidence type="ECO:0000269" key="13">
    <source>
    </source>
</evidence>
<evidence type="ECO:0000269" key="14">
    <source>
    </source>
</evidence>
<evidence type="ECO:0000269" key="15">
    <source>
    </source>
</evidence>
<evidence type="ECO:0000269" key="16">
    <source>
    </source>
</evidence>
<evidence type="ECO:0000269" key="17">
    <source>
    </source>
</evidence>
<evidence type="ECO:0000269" key="18">
    <source>
    </source>
</evidence>
<evidence type="ECO:0000269" key="19">
    <source>
    </source>
</evidence>
<evidence type="ECO:0000303" key="20">
    <source>
    </source>
</evidence>
<evidence type="ECO:0000305" key="21"/>
<evidence type="ECO:0007744" key="22">
    <source>
    </source>
</evidence>
<evidence type="ECO:0007744" key="23">
    <source>
    </source>
</evidence>
<evidence type="ECO:0007744" key="24">
    <source>
    </source>
</evidence>
<evidence type="ECO:0007744" key="25">
    <source>
    </source>
</evidence>
<gene>
    <name type="primary">SHB</name>
</gene>
<proteinExistence type="evidence at protein level"/>
<name>SHB_HUMAN</name>
<organism>
    <name type="scientific">Homo sapiens</name>
    <name type="common">Human</name>
    <dbReference type="NCBI Taxonomy" id="9606"/>
    <lineage>
        <taxon>Eukaryota</taxon>
        <taxon>Metazoa</taxon>
        <taxon>Chordata</taxon>
        <taxon>Craniata</taxon>
        <taxon>Vertebrata</taxon>
        <taxon>Euteleostomi</taxon>
        <taxon>Mammalia</taxon>
        <taxon>Eutheria</taxon>
        <taxon>Euarchontoglires</taxon>
        <taxon>Primates</taxon>
        <taxon>Haplorrhini</taxon>
        <taxon>Catarrhini</taxon>
        <taxon>Hominidae</taxon>
        <taxon>Homo</taxon>
    </lineage>
</organism>
<comment type="function">
    <text evidence="5 6 8 11 12 13 14 17 18 19">Adapter protein which regulates several signal transduction cascades by linking activated receptors to downstream signaling components. May play a role in angiogenesis by regulating FGFR1, VEGFR2 and PDGFR signaling. May also play a role in T-cell antigen receptor/TCR signaling, interleukin-2 signaling, apoptosis and neuronal cells differentiation by mediating basic-FGF and NGF-induced signaling cascades. May also regulate IRS1 and IRS2 signaling in insulin-producing cells.</text>
</comment>
<comment type="subunit">
    <text evidence="1 4 6 7 8 9 10 11 12 13 15 16 18">Interacts with PTPN11 (By similarity). Interacts with phosphorylated 'Tyr-720' of the ligand-activated receptor PDGFRA via its SH2 domain. Interacts with the ligand-activated receptors PDGFRB, FGFR1, KDR/VEGFR2, IL2RB and IL2RG. Interacts with EPS8 and V-SRC. Interacts with GRB2 and GRAP. Interacts with CD3Z. Interacts with tyrosine-phosphorylated LAT upon T-cell antigen receptor activation. Interacts with PLCG1. Interacts with ZAP70, LCP2/SLP-76, VAV1 and GRAP2. Interacts with JAK1 and JAK3. Interacts with PTK2/FAK1. Interacts with CRK/CrKII. Interacts with IRS2.</text>
</comment>
<comment type="interaction">
    <interactant intactId="EBI-4402156">
        <id>Q15464</id>
    </interactant>
    <interactant intactId="EBI-375543">
        <id>P00519</id>
        <label>ABL1</label>
    </interactant>
    <organismsDiffer>false</organismsDiffer>
    <experiments>5</experiments>
</comment>
<comment type="interaction">
    <interactant intactId="EBI-4402156">
        <id>Q15464</id>
    </interactant>
    <interactant intactId="EBI-1379503">
        <id>P10721</id>
        <label>KIT</label>
    </interactant>
    <organismsDiffer>false</organismsDiffer>
    <experiments>2</experiments>
</comment>
<comment type="interaction">
    <interactant intactId="EBI-4402156">
        <id>Q15464</id>
    </interactant>
    <interactant intactId="EBI-1039152">
        <id>P08581</id>
        <label>MET</label>
    </interactant>
    <organismsDiffer>false</organismsDiffer>
    <experiments>4</experiments>
</comment>
<comment type="subcellular location">
    <subcellularLocation>
        <location>Cytoplasm</location>
    </subcellularLocation>
    <subcellularLocation>
        <location>Cell membrane</location>
        <topology>Peripheral membrane protein</topology>
        <orientation>Cytoplasmic side</orientation>
    </subcellularLocation>
    <text>Associates with membrane lipid rafts upon TCR stimulation.</text>
</comment>
<comment type="alternative products">
    <event type="alternative splicing"/>
    <isoform>
        <id>Q15464-1</id>
        <name>1</name>
        <sequence type="displayed"/>
    </isoform>
    <isoform>
        <id>Q15464-2</id>
        <name>2</name>
        <sequence type="described" ref="VSP_019846 VSP_019847"/>
    </isoform>
</comment>
<comment type="tissue specificity">
    <text evidence="18">Widely expressed.</text>
</comment>
<comment type="domain">
    <text>The SH2 domain preferentially binds phosphopeptides with the consensus sequence Y-[TVI]-X-L and mediates interaction with PDGFRA, PDGFRB, FGRFR1, IL2RB, IL2RG, CD3Z and CRK/CrKII.</text>
</comment>
<comment type="PTM">
    <text evidence="4">Phosphorylated upon PDGFRA, PDGFRB, TCR, IL2 receptor, FGFR1 or VEGFR2 activation.</text>
</comment>
<comment type="sequence caution" evidence="21">
    <conflict type="erroneous initiation">
        <sequence resource="EMBL-CDS" id="AAH94765"/>
    </conflict>
</comment>
<comment type="sequence caution" evidence="21">
    <conflict type="erroneous initiation">
        <sequence resource="EMBL-CDS" id="CAA53091"/>
    </conflict>
</comment>
<reference key="1">
    <citation type="journal article" date="1994" name="Oncogene">
        <title>Shb is a ubiquitously expressed Src homology 2 protein.</title>
        <authorList>
            <person name="Welsh M."/>
            <person name="Mares J."/>
            <person name="Karlsson T."/>
            <person name="Lavergne C."/>
            <person name="Breant B."/>
            <person name="Claesson-Welsh L."/>
        </authorList>
    </citation>
    <scope>NUCLEOTIDE SEQUENCE [MRNA] (ISOFORM 1)</scope>
    <scope>SUBCELLULAR LOCATION</scope>
    <scope>INTERACTION WITH PDGFRB</scope>
    <source>
        <tissue>Fetal brain</tissue>
    </source>
</reference>
<reference key="2">
    <citation type="journal article" date="2004" name="Nature">
        <title>DNA sequence and analysis of human chromosome 9.</title>
        <authorList>
            <person name="Humphray S.J."/>
            <person name="Oliver K."/>
            <person name="Hunt A.R."/>
            <person name="Plumb R.W."/>
            <person name="Loveland J.E."/>
            <person name="Howe K.L."/>
            <person name="Andrews T.D."/>
            <person name="Searle S."/>
            <person name="Hunt S.E."/>
            <person name="Scott C.E."/>
            <person name="Jones M.C."/>
            <person name="Ainscough R."/>
            <person name="Almeida J.P."/>
            <person name="Ambrose K.D."/>
            <person name="Ashwell R.I.S."/>
            <person name="Babbage A.K."/>
            <person name="Babbage S."/>
            <person name="Bagguley C.L."/>
            <person name="Bailey J."/>
            <person name="Banerjee R."/>
            <person name="Barker D.J."/>
            <person name="Barlow K.F."/>
            <person name="Bates K."/>
            <person name="Beasley H."/>
            <person name="Beasley O."/>
            <person name="Bird C.P."/>
            <person name="Bray-Allen S."/>
            <person name="Brown A.J."/>
            <person name="Brown J.Y."/>
            <person name="Burford D."/>
            <person name="Burrill W."/>
            <person name="Burton J."/>
            <person name="Carder C."/>
            <person name="Carter N.P."/>
            <person name="Chapman J.C."/>
            <person name="Chen Y."/>
            <person name="Clarke G."/>
            <person name="Clark S.Y."/>
            <person name="Clee C.M."/>
            <person name="Clegg S."/>
            <person name="Collier R.E."/>
            <person name="Corby N."/>
            <person name="Crosier M."/>
            <person name="Cummings A.T."/>
            <person name="Davies J."/>
            <person name="Dhami P."/>
            <person name="Dunn M."/>
            <person name="Dutta I."/>
            <person name="Dyer L.W."/>
            <person name="Earthrowl M.E."/>
            <person name="Faulkner L."/>
            <person name="Fleming C.J."/>
            <person name="Frankish A."/>
            <person name="Frankland J.A."/>
            <person name="French L."/>
            <person name="Fricker D.G."/>
            <person name="Garner P."/>
            <person name="Garnett J."/>
            <person name="Ghori J."/>
            <person name="Gilbert J.G.R."/>
            <person name="Glison C."/>
            <person name="Grafham D.V."/>
            <person name="Gribble S."/>
            <person name="Griffiths C."/>
            <person name="Griffiths-Jones S."/>
            <person name="Grocock R."/>
            <person name="Guy J."/>
            <person name="Hall R.E."/>
            <person name="Hammond S."/>
            <person name="Harley J.L."/>
            <person name="Harrison E.S.I."/>
            <person name="Hart E.A."/>
            <person name="Heath P.D."/>
            <person name="Henderson C.D."/>
            <person name="Hopkins B.L."/>
            <person name="Howard P.J."/>
            <person name="Howden P.J."/>
            <person name="Huckle E."/>
            <person name="Johnson C."/>
            <person name="Johnson D."/>
            <person name="Joy A.A."/>
            <person name="Kay M."/>
            <person name="Keenan S."/>
            <person name="Kershaw J.K."/>
            <person name="Kimberley A.M."/>
            <person name="King A."/>
            <person name="Knights A."/>
            <person name="Laird G.K."/>
            <person name="Langford C."/>
            <person name="Lawlor S."/>
            <person name="Leongamornlert D.A."/>
            <person name="Leversha M."/>
            <person name="Lloyd C."/>
            <person name="Lloyd D.M."/>
            <person name="Lovell J."/>
            <person name="Martin S."/>
            <person name="Mashreghi-Mohammadi M."/>
            <person name="Matthews L."/>
            <person name="McLaren S."/>
            <person name="McLay K.E."/>
            <person name="McMurray A."/>
            <person name="Milne S."/>
            <person name="Nickerson T."/>
            <person name="Nisbett J."/>
            <person name="Nordsiek G."/>
            <person name="Pearce A.V."/>
            <person name="Peck A.I."/>
            <person name="Porter K.M."/>
            <person name="Pandian R."/>
            <person name="Pelan S."/>
            <person name="Phillimore B."/>
            <person name="Povey S."/>
            <person name="Ramsey Y."/>
            <person name="Rand V."/>
            <person name="Scharfe M."/>
            <person name="Sehra H.K."/>
            <person name="Shownkeen R."/>
            <person name="Sims S.K."/>
            <person name="Skuce C.D."/>
            <person name="Smith M."/>
            <person name="Steward C.A."/>
            <person name="Swarbreck D."/>
            <person name="Sycamore N."/>
            <person name="Tester J."/>
            <person name="Thorpe A."/>
            <person name="Tracey A."/>
            <person name="Tromans A."/>
            <person name="Thomas D.W."/>
            <person name="Wall M."/>
            <person name="Wallis J.M."/>
            <person name="West A.P."/>
            <person name="Whitehead S.L."/>
            <person name="Willey D.L."/>
            <person name="Williams S.A."/>
            <person name="Wilming L."/>
            <person name="Wray P.W."/>
            <person name="Young L."/>
            <person name="Ashurst J.L."/>
            <person name="Coulson A."/>
            <person name="Blocker H."/>
            <person name="Durbin R.M."/>
            <person name="Sulston J.E."/>
            <person name="Hubbard T."/>
            <person name="Jackson M.J."/>
            <person name="Bentley D.R."/>
            <person name="Beck S."/>
            <person name="Rogers J."/>
            <person name="Dunham I."/>
        </authorList>
    </citation>
    <scope>NUCLEOTIDE SEQUENCE [LARGE SCALE GENOMIC DNA]</scope>
</reference>
<reference key="3">
    <citation type="submission" date="2005-09" db="EMBL/GenBank/DDBJ databases">
        <authorList>
            <person name="Mural R.J."/>
            <person name="Istrail S."/>
            <person name="Sutton G.G."/>
            <person name="Florea L."/>
            <person name="Halpern A.L."/>
            <person name="Mobarry C.M."/>
            <person name="Lippert R."/>
            <person name="Walenz B."/>
            <person name="Shatkay H."/>
            <person name="Dew I."/>
            <person name="Miller J.R."/>
            <person name="Flanigan M.J."/>
            <person name="Edwards N.J."/>
            <person name="Bolanos R."/>
            <person name="Fasulo D."/>
            <person name="Halldorsson B.V."/>
            <person name="Hannenhalli S."/>
            <person name="Turner R."/>
            <person name="Yooseph S."/>
            <person name="Lu F."/>
            <person name="Nusskern D.R."/>
            <person name="Shue B.C."/>
            <person name="Zheng X.H."/>
            <person name="Zhong F."/>
            <person name="Delcher A.L."/>
            <person name="Huson D.H."/>
            <person name="Kravitz S.A."/>
            <person name="Mouchard L."/>
            <person name="Reinert K."/>
            <person name="Remington K.A."/>
            <person name="Clark A.G."/>
            <person name="Waterman M.S."/>
            <person name="Eichler E.E."/>
            <person name="Adams M.D."/>
            <person name="Hunkapiller M.W."/>
            <person name="Myers E.W."/>
            <person name="Venter J.C."/>
        </authorList>
    </citation>
    <scope>NUCLEOTIDE SEQUENCE [LARGE SCALE GENOMIC DNA]</scope>
</reference>
<reference key="4">
    <citation type="journal article" date="2004" name="Genome Res.">
        <title>The status, quality, and expansion of the NIH full-length cDNA project: the Mammalian Gene Collection (MGC).</title>
        <authorList>
            <consortium name="The MGC Project Team"/>
        </authorList>
    </citation>
    <scope>NUCLEOTIDE SEQUENCE [LARGE SCALE MRNA] (ISOFORMS 1 AND 2)</scope>
    <source>
        <tissue>Placenta</tissue>
        <tissue>Testis</tissue>
    </source>
</reference>
<reference key="5">
    <citation type="journal article" date="1995" name="Oncogene">
        <title>Molecular interactions of the Src homology 2 domain protein Shb with phosphotyrosine residues, tyrosine kinase receptors and Src homology 3 domain proteins.</title>
        <authorList>
            <person name="Karlsson T."/>
            <person name="Songyang Z."/>
            <person name="Landgren E."/>
            <person name="Lavergne C."/>
            <person name="Di Fiore P.P."/>
            <person name="Anafi M."/>
            <person name="Pawson T."/>
            <person name="Cantley L.C."/>
            <person name="Claesson-Welsh L."/>
            <person name="Welsh M."/>
        </authorList>
    </citation>
    <scope>INTERACTION WITH PDGFRB; FGFR1; EPS8 AND V-SRC</scope>
</reference>
<reference key="6">
    <citation type="journal article" date="1996" name="Oncogene">
        <title>Apoptosis of NIH3T3 cells overexpressing the Src homology 2 domain protein Shb.</title>
        <authorList>
            <person name="Karlsson T."/>
            <person name="Welsh M."/>
        </authorList>
    </citation>
    <scope>FUNCTION</scope>
</reference>
<reference key="7">
    <citation type="journal article" date="1998" name="Cell Growth Differ.">
        <title>The Src homology 2 domain protein Shb transmits basic fibroblast growth factor- and nerve growth factor-dependent differentiation signals in PC12 cells.</title>
        <authorList>
            <person name="Karlsson T."/>
            <person name="Kullander K."/>
            <person name="Welsh M."/>
        </authorList>
    </citation>
    <scope>FUNCTION</scope>
</reference>
<reference key="8">
    <citation type="journal article" date="1998" name="Oncogene">
        <title>Stimulation through the T cell receptor leads to interactions between SHB and several signaling proteins.</title>
        <authorList>
            <person name="Welsh M."/>
            <person name="Songyang Z."/>
            <person name="Frantz J.D."/>
            <person name="Trueb T."/>
            <person name="Reedquist K.A."/>
            <person name="Karlsson T."/>
            <person name="Miyazaki M."/>
            <person name="Cantley L.C."/>
            <person name="Band H."/>
            <person name="Shoelson S.E."/>
        </authorList>
    </citation>
    <scope>FUNCTION</scope>
    <scope>TISSUE SPECIFICITY</scope>
    <scope>INTERACTION WITH GRB2; GRAP AND CD3Z</scope>
    <scope>MUTAGENESIS OF ARG-435</scope>
</reference>
<reference key="9">
    <citation type="journal article" date="1999" name="J. Biol. Chem.">
        <title>Requirement of the Src homology 2 domain protein Shb for T cell receptor-dependent activation of the interleukin-2 gene nuclear factor for activation of T cells element in Jurkat T cells.</title>
        <authorList>
            <person name="Lindholm C.K."/>
            <person name="Gylfe E."/>
            <person name="Zhang W."/>
            <person name="Samelson L.E."/>
            <person name="Welsh M."/>
        </authorList>
    </citation>
    <scope>PHOSPHORYLATION</scope>
    <scope>INTERACTION WITH LAT AND PLCG1</scope>
</reference>
<reference key="10">
    <citation type="journal article" date="2000" name="Blood">
        <title>Endostatin-induced tyrosine kinase signaling through the Shb adaptor protein regulates endothelial cell apoptosis.</title>
        <authorList>
            <person name="Dixelius J."/>
            <person name="Larsson H."/>
            <person name="Sasaki T."/>
            <person name="Holmqvist K."/>
            <person name="Lu L."/>
            <person name="Engstroem A."/>
            <person name="Timpl R."/>
            <person name="Welsh M."/>
            <person name="Claesson-Welsh L."/>
        </authorList>
    </citation>
    <scope>FUNCTION</scope>
</reference>
<reference key="11">
    <citation type="journal article" date="2000" name="Exp. Cell Res.">
        <title>Platelet-derived growth factor-mediated signaling through the Shb adaptor protein: effects on cytoskeletal organization.</title>
        <authorList>
            <person name="Hooshmand-Rad R."/>
            <person name="Lu L."/>
            <person name="Heldin C.-H."/>
            <person name="Claesson-Welsh L."/>
            <person name="Welsh M."/>
        </authorList>
    </citation>
    <scope>FUNCTION</scope>
    <scope>INTERACTION WITH PDGFRA</scope>
</reference>
<reference key="12">
    <citation type="journal article" date="2000" name="Exp. Cell Res.">
        <title>NGF-dependent neurite outgrowth in PC12 cells overexpressing the Src homology 2-domain protein shb requires activation of the Rap1 pathway.</title>
        <authorList>
            <person name="Lu L."/>
            <person name="Anneren C."/>
            <person name="Reedquist K.A."/>
            <person name="Bos J.L."/>
            <person name="Welsh M."/>
        </authorList>
    </citation>
    <scope>INTERACTION WITH CRK</scope>
</reference>
<reference key="13">
    <citation type="journal article" date="2002" name="Biochem. Biophys. Res. Commun.">
        <title>IL-2 receptor signaling through the Shb adapter protein in T and NK cells.</title>
        <authorList>
            <person name="Lindholm C.K."/>
        </authorList>
    </citation>
    <scope>INTERACTION WITH IL2RB; IL2RG; JAK1 AND JAK3</scope>
</reference>
<reference key="14">
    <citation type="journal article" date="2002" name="Eur. J. Biochem.">
        <title>Shb links SLP-76 and Vav with the CD3 complex in Jurkat T cells.</title>
        <authorList>
            <person name="Lindholm C.K."/>
            <person name="Henriksson M.L."/>
            <person name="Hallberg B."/>
            <person name="Welsh M."/>
        </authorList>
    </citation>
    <scope>FUNCTION</scope>
    <scope>INTERACTION WITH ZAP70; LCP2; VAV1 AND GRAP2</scope>
    <scope>SUBCELLULAR LOCATION</scope>
</reference>
<reference key="15">
    <citation type="journal article" date="2002" name="Mol. Biol. Cell">
        <title>The Shb adaptor protein binds to tyrosine 766 in the FGFR-1 and regulates the Ras/MEK/MAPK pathway via FRS2 phosphorylation in endothelial cells.</title>
        <authorList>
            <person name="Cross M.J."/>
            <person name="Lu L."/>
            <person name="Magnusson P."/>
            <person name="Nyqvist D."/>
            <person name="Holmqvist K."/>
            <person name="Welsh M."/>
            <person name="Claesson-Welsh L."/>
        </authorList>
    </citation>
    <scope>INTERACTION WITH FGFR1</scope>
</reference>
<reference key="16">
    <citation type="journal article" date="2002" name="Mol. Med.">
        <title>Overexpression of the Shb SH2 domain-protein in insulin-producing cells leads to altered signaling through the IRS-1 and IRS-2 proteins.</title>
        <authorList>
            <person name="Welsh N."/>
            <person name="Makeeva N."/>
            <person name="Welsh M."/>
        </authorList>
    </citation>
    <scope>FUNCTION</scope>
    <scope>INTERACTION WITH IRS2</scope>
</reference>
<reference key="17">
    <citation type="journal article" date="2003" name="Cell. Signal.">
        <title>The Shb adaptor protein causes Src-dependent cell spreading and activation of focal adhesion kinase in murine brain endothelial cells.</title>
        <authorList>
            <person name="Holmqvist K."/>
            <person name="Cross M.J."/>
            <person name="Riley D."/>
            <person name="Welsh M."/>
        </authorList>
    </citation>
    <scope>FUNCTION</scope>
    <scope>INTERACTION WITH PTK2/FAK1</scope>
</reference>
<reference key="18">
    <citation type="journal article" date="2004" name="J. Biol. Chem.">
        <title>The adaptor protein shb binds to tyrosine 1175 in vascular endothelial growth factor (VEGF) receptor-2 and regulates VEGF-dependent cellular migration.</title>
        <authorList>
            <person name="Holmqvist K."/>
            <person name="Cross M.J."/>
            <person name="Rolny C."/>
            <person name="Haegerkvist R."/>
            <person name="Rahimi N."/>
            <person name="Matsumoto T."/>
            <person name="Claesson-Welsh L."/>
            <person name="Welsh M."/>
        </authorList>
    </citation>
    <scope>FUNCTION</scope>
    <scope>INTERACTION WITH KDR</scope>
</reference>
<reference key="19">
    <citation type="journal article" date="2005" name="Exp. Cell Res.">
        <title>Shb promotes blood vessel formation in embryoid bodies by augmenting vascular endothelial growth factor receptor-2 and platelet-derived growth factor receptor-beta signaling.</title>
        <authorList>
            <person name="Rolny C."/>
            <person name="Lu L."/>
            <person name="Aagren N."/>
            <person name="Nilsson I."/>
            <person name="Roe C."/>
            <person name="Webb G.C."/>
            <person name="Welsh M."/>
        </authorList>
    </citation>
    <scope>FUNCTION</scope>
</reference>
<reference key="20">
    <citation type="journal article" date="2008" name="J. Proteome Res.">
        <title>Combining protein-based IMAC, peptide-based IMAC, and MudPIT for efficient phosphoproteomic analysis.</title>
        <authorList>
            <person name="Cantin G.T."/>
            <person name="Yi W."/>
            <person name="Lu B."/>
            <person name="Park S.K."/>
            <person name="Xu T."/>
            <person name="Lee J.-D."/>
            <person name="Yates J.R. III"/>
        </authorList>
    </citation>
    <scope>PHOSPHORYLATION [LARGE SCALE ANALYSIS] AT SER-388</scope>
    <scope>IDENTIFICATION BY MASS SPECTROMETRY [LARGE SCALE ANALYSIS]</scope>
    <source>
        <tissue>Cervix carcinoma</tissue>
    </source>
</reference>
<reference key="21">
    <citation type="journal article" date="2008" name="Proc. Natl. Acad. Sci. U.S.A.">
        <title>A quantitative atlas of mitotic phosphorylation.</title>
        <authorList>
            <person name="Dephoure N."/>
            <person name="Zhou C."/>
            <person name="Villen J."/>
            <person name="Beausoleil S.A."/>
            <person name="Bakalarski C.E."/>
            <person name="Elledge S.J."/>
            <person name="Gygi S.P."/>
        </authorList>
    </citation>
    <scope>PHOSPHORYLATION [LARGE SCALE ANALYSIS] AT SER-317</scope>
    <scope>IDENTIFICATION BY MASS SPECTROMETRY [LARGE SCALE ANALYSIS]</scope>
    <source>
        <tissue>Cervix carcinoma</tissue>
    </source>
</reference>
<reference key="22">
    <citation type="journal article" date="2009" name="Anal. Chem.">
        <title>Lys-N and trypsin cover complementary parts of the phosphoproteome in a refined SCX-based approach.</title>
        <authorList>
            <person name="Gauci S."/>
            <person name="Helbig A.O."/>
            <person name="Slijper M."/>
            <person name="Krijgsveld J."/>
            <person name="Heck A.J."/>
            <person name="Mohammed S."/>
        </authorList>
    </citation>
    <scope>IDENTIFICATION BY MASS SPECTROMETRY [LARGE SCALE ANALYSIS]</scope>
</reference>
<reference key="23">
    <citation type="journal article" date="2010" name="Sci. Signal.">
        <title>Quantitative phosphoproteomics reveals widespread full phosphorylation site occupancy during mitosis.</title>
        <authorList>
            <person name="Olsen J.V."/>
            <person name="Vermeulen M."/>
            <person name="Santamaria A."/>
            <person name="Kumar C."/>
            <person name="Miller M.L."/>
            <person name="Jensen L.J."/>
            <person name="Gnad F."/>
            <person name="Cox J."/>
            <person name="Jensen T.S."/>
            <person name="Nigg E.A."/>
            <person name="Brunak S."/>
            <person name="Mann M."/>
        </authorList>
    </citation>
    <scope>IDENTIFICATION BY MASS SPECTROMETRY [LARGE SCALE ANALYSIS]</scope>
    <source>
        <tissue>Cervix carcinoma</tissue>
    </source>
</reference>
<reference key="24">
    <citation type="journal article" date="2013" name="J. Proteome Res.">
        <title>Toward a comprehensive characterization of a human cancer cell phosphoproteome.</title>
        <authorList>
            <person name="Zhou H."/>
            <person name="Di Palma S."/>
            <person name="Preisinger C."/>
            <person name="Peng M."/>
            <person name="Polat A.N."/>
            <person name="Heck A.J."/>
            <person name="Mohammed S."/>
        </authorList>
    </citation>
    <scope>PHOSPHORYLATION [LARGE SCALE ANALYSIS] AT SER-102; SER-307 AND SER-388</scope>
    <scope>IDENTIFICATION BY MASS SPECTROMETRY [LARGE SCALE ANALYSIS]</scope>
    <source>
        <tissue>Cervix carcinoma</tissue>
        <tissue>Erythroleukemia</tissue>
    </source>
</reference>
<reference key="25">
    <citation type="journal article" date="2014" name="J. Proteomics">
        <title>An enzyme assisted RP-RPLC approach for in-depth analysis of human liver phosphoproteome.</title>
        <authorList>
            <person name="Bian Y."/>
            <person name="Song C."/>
            <person name="Cheng K."/>
            <person name="Dong M."/>
            <person name="Wang F."/>
            <person name="Huang J."/>
            <person name="Sun D."/>
            <person name="Wang L."/>
            <person name="Ye M."/>
            <person name="Zou H."/>
        </authorList>
    </citation>
    <scope>IDENTIFICATION BY MASS SPECTROMETRY [LARGE SCALE ANALYSIS]</scope>
    <source>
        <tissue>Liver</tissue>
    </source>
</reference>
<reference key="26">
    <citation type="journal article" date="2017" name="Nat. Struct. Mol. Biol.">
        <title>Site-specific mapping of the human SUMO proteome reveals co-modification with phosphorylation.</title>
        <authorList>
            <person name="Hendriks I.A."/>
            <person name="Lyon D."/>
            <person name="Young C."/>
            <person name="Jensen L.J."/>
            <person name="Vertegaal A.C."/>
            <person name="Nielsen M.L."/>
        </authorList>
    </citation>
    <scope>SUMOYLATION [LARGE SCALE ANALYSIS] AT LYS-187</scope>
    <scope>IDENTIFICATION BY MASS SPECTROMETRY [LARGE SCALE ANALYSIS]</scope>
</reference>
<feature type="chain" id="PRO_0000246324" description="SH2 domain-containing adapter protein B">
    <location>
        <begin position="1"/>
        <end position="509"/>
    </location>
</feature>
<feature type="domain" description="SH2" evidence="2">
    <location>
        <begin position="410"/>
        <end position="504"/>
    </location>
</feature>
<feature type="region of interest" description="Mediates interaction with LAT, PTK2/FAK1, JAK1 and JAK3" evidence="4 10">
    <location>
        <begin position="1"/>
        <end position="410"/>
    </location>
</feature>
<feature type="region of interest" description="Disordered" evidence="3">
    <location>
        <begin position="1"/>
        <end position="103"/>
    </location>
</feature>
<feature type="region of interest" description="Disordered" evidence="3">
    <location>
        <begin position="144"/>
        <end position="178"/>
    </location>
</feature>
<feature type="region of interest" description="Disordered" evidence="3">
    <location>
        <begin position="229"/>
        <end position="385"/>
    </location>
</feature>
<feature type="compositionally biased region" description="Low complexity" evidence="3">
    <location>
        <begin position="44"/>
        <end position="61"/>
    </location>
</feature>
<feature type="compositionally biased region" description="Polar residues" evidence="3">
    <location>
        <begin position="62"/>
        <end position="79"/>
    </location>
</feature>
<feature type="compositionally biased region" description="Low complexity" evidence="3">
    <location>
        <begin position="144"/>
        <end position="158"/>
    </location>
</feature>
<feature type="compositionally biased region" description="Basic and acidic residues" evidence="3">
    <location>
        <begin position="233"/>
        <end position="242"/>
    </location>
</feature>
<feature type="compositionally biased region" description="Basic and acidic residues" evidence="3">
    <location>
        <begin position="250"/>
        <end position="262"/>
    </location>
</feature>
<feature type="compositionally biased region" description="Polar residues" evidence="3">
    <location>
        <begin position="307"/>
        <end position="317"/>
    </location>
</feature>
<feature type="compositionally biased region" description="Basic and acidic residues" evidence="3">
    <location>
        <begin position="319"/>
        <end position="334"/>
    </location>
</feature>
<feature type="modified residue" description="Phosphoserine" evidence="24">
    <location>
        <position position="102"/>
    </location>
</feature>
<feature type="modified residue" description="Phosphoserine" evidence="24">
    <location>
        <position position="307"/>
    </location>
</feature>
<feature type="modified residue" description="Phosphoserine" evidence="23">
    <location>
        <position position="317"/>
    </location>
</feature>
<feature type="modified residue" description="Phosphoserine" evidence="22 24">
    <location>
        <position position="388"/>
    </location>
</feature>
<feature type="cross-link" description="Glycyl lysine isopeptide (Lys-Gly) (interchain with G-Cter in SUMO2)" evidence="25">
    <location>
        <position position="187"/>
    </location>
</feature>
<feature type="splice variant" id="VSP_019846" description="In isoform 2." evidence="20">
    <original>EFQRQESVRSQHKGIQLY</original>
    <variation>GLQEAWRHSPSGCFPVGP</variation>
    <location>
        <begin position="280"/>
        <end position="297"/>
    </location>
</feature>
<feature type="splice variant" id="VSP_019847" description="In isoform 2." evidence="20">
    <location>
        <begin position="298"/>
        <end position="509"/>
    </location>
</feature>
<feature type="mutagenesis site" description="Loss of interaction with CD3Z. Alters LAT, PLCG1, VAV1 and LCP2 phosphorylation, MAP kinase signaling, Rac1 and JNK activation, intracellular calcium increase, activation of the nuclear factor for activation of T-cells and subsequent interleukin-2 expression which normally occur upon T-cells stimulation." evidence="18">
    <original>R</original>
    <variation>K</variation>
    <location>
        <position position="435"/>
    </location>
</feature>
<feature type="sequence conflict" description="In Ref. 1; CAA53091." evidence="21" ref="1">
    <original>DFE</original>
    <variation>HFQ</variation>
    <location>
        <begin position="91"/>
        <end position="93"/>
    </location>
</feature>
<feature type="sequence conflict" description="In Ref. 1; CAA53091." evidence="21" ref="1">
    <original>I</original>
    <variation>S</variation>
    <location>
        <position position="347"/>
    </location>
</feature>
<feature type="sequence conflict" description="In Ref. 1; CAA53091." evidence="21" ref="1">
    <original>S</original>
    <variation>P</variation>
    <location>
        <position position="445"/>
    </location>
</feature>
<sequence>MAKWLNKYFSLGNSKTKSPPQPPRPDYREQRRRGERPSQPPQAVPQASSAASASCGPATASCFSASSGSLPDDSGSTSDLIRAYRAQKERDFEDPYNGPGSSLRKLRAMCRLDYCGGSGEPGGVQRAFSASSASGAAGCCCASSGAGAAASSSSSSGSPHLYRSSSERRPATPAEVRYISPKHRLIKVESAAGGGAGDPLGGACAGGRTWSPTACGGKKLLNKCAASAAEESGAGKKDKVTIADDYSDPFDAKNDLKSKAGKGESAGYMEPYEAQRIMTEFQRQESVRSQHKGIQLYDTPYEPEGQSVDSDSESTVSPRLRESKLPQDDDRPADEYDQPWEWNRVTIPALAAQFNGNEKRQSSPSPSRDRRRQLRAPGGGFKPIKHGSPEFCGILGERVDPAVPLEKQIWYHGAISRGDAENLLRLCKECSYLVRNSQTSKHDYSLSLRSNQGFMHMKLAKTKEKYVLGQNSPPFDSVPEVIHYYTTRKLPIKGAEHLSLLYPVAVRTL</sequence>
<keyword id="KW-0025">Alternative splicing</keyword>
<keyword id="KW-0037">Angiogenesis</keyword>
<keyword id="KW-0053">Apoptosis</keyword>
<keyword id="KW-1003">Cell membrane</keyword>
<keyword id="KW-0963">Cytoplasm</keyword>
<keyword id="KW-0217">Developmental protein</keyword>
<keyword id="KW-0221">Differentiation</keyword>
<keyword id="KW-1017">Isopeptide bond</keyword>
<keyword id="KW-0472">Membrane</keyword>
<keyword id="KW-0597">Phosphoprotein</keyword>
<keyword id="KW-1267">Proteomics identification</keyword>
<keyword id="KW-1185">Reference proteome</keyword>
<keyword id="KW-0727">SH2 domain</keyword>
<keyword id="KW-0832">Ubl conjugation</keyword>
<dbReference type="EMBL" id="X75342">
    <property type="protein sequence ID" value="CAA53091.1"/>
    <property type="status" value="ALT_INIT"/>
    <property type="molecule type" value="mRNA"/>
</dbReference>
<dbReference type="EMBL" id="AL138752">
    <property type="status" value="NOT_ANNOTATED_CDS"/>
    <property type="molecule type" value="Genomic_DNA"/>
</dbReference>
<dbReference type="EMBL" id="AL161448">
    <property type="status" value="NOT_ANNOTATED_CDS"/>
    <property type="molecule type" value="Genomic_DNA"/>
</dbReference>
<dbReference type="EMBL" id="AL583849">
    <property type="status" value="NOT_ANNOTATED_CDS"/>
    <property type="molecule type" value="Genomic_DNA"/>
</dbReference>
<dbReference type="EMBL" id="CH471071">
    <property type="protein sequence ID" value="EAW58254.1"/>
    <property type="molecule type" value="Genomic_DNA"/>
</dbReference>
<dbReference type="EMBL" id="CH471071">
    <property type="protein sequence ID" value="EAW58255.1"/>
    <property type="molecule type" value="Genomic_DNA"/>
</dbReference>
<dbReference type="EMBL" id="BC094765">
    <property type="protein sequence ID" value="AAH94765.1"/>
    <property type="status" value="ALT_INIT"/>
    <property type="molecule type" value="mRNA"/>
</dbReference>
<dbReference type="EMBL" id="BC136581">
    <property type="protein sequence ID" value="AAI36582.1"/>
    <property type="molecule type" value="mRNA"/>
</dbReference>
<dbReference type="EMBL" id="BC136582">
    <property type="protein sequence ID" value="AAI36583.1"/>
    <property type="molecule type" value="mRNA"/>
</dbReference>
<dbReference type="CCDS" id="CCDS43806.1">
    <molecule id="Q15464-1"/>
</dbReference>
<dbReference type="PIR" id="I38228">
    <property type="entry name" value="I38228"/>
</dbReference>
<dbReference type="RefSeq" id="NP_003019.2">
    <molecule id="Q15464-1"/>
    <property type="nucleotide sequence ID" value="NM_003028.3"/>
</dbReference>
<dbReference type="SMR" id="Q15464"/>
<dbReference type="BioGRID" id="112358">
    <property type="interactions" value="84"/>
</dbReference>
<dbReference type="FunCoup" id="Q15464">
    <property type="interactions" value="1050"/>
</dbReference>
<dbReference type="IntAct" id="Q15464">
    <property type="interactions" value="23"/>
</dbReference>
<dbReference type="MINT" id="Q15464"/>
<dbReference type="STRING" id="9606.ENSP00000366936"/>
<dbReference type="BindingDB" id="Q15464"/>
<dbReference type="iPTMnet" id="Q15464"/>
<dbReference type="PhosphoSitePlus" id="Q15464"/>
<dbReference type="BioMuta" id="SHB"/>
<dbReference type="DMDM" id="110816415"/>
<dbReference type="jPOST" id="Q15464"/>
<dbReference type="MassIVE" id="Q15464"/>
<dbReference type="PaxDb" id="9606-ENSP00000366936"/>
<dbReference type="PeptideAtlas" id="Q15464"/>
<dbReference type="ProteomicsDB" id="60600">
    <molecule id="Q15464-1"/>
</dbReference>
<dbReference type="ProteomicsDB" id="60601">
    <molecule id="Q15464-2"/>
</dbReference>
<dbReference type="Pumba" id="Q15464"/>
<dbReference type="Antibodypedia" id="4119">
    <property type="antibodies" value="278 antibodies from 30 providers"/>
</dbReference>
<dbReference type="DNASU" id="6461"/>
<dbReference type="Ensembl" id="ENST00000377707.4">
    <molecule id="Q15464-1"/>
    <property type="protein sequence ID" value="ENSP00000366936.3"/>
    <property type="gene ID" value="ENSG00000107338.10"/>
</dbReference>
<dbReference type="GeneID" id="6461"/>
<dbReference type="KEGG" id="hsa:6461"/>
<dbReference type="MANE-Select" id="ENST00000377707.4">
    <property type="protein sequence ID" value="ENSP00000366936.3"/>
    <property type="RefSeq nucleotide sequence ID" value="NM_003028.3"/>
    <property type="RefSeq protein sequence ID" value="NP_003019.2"/>
</dbReference>
<dbReference type="UCSC" id="uc004aax.4">
    <molecule id="Q15464-1"/>
    <property type="organism name" value="human"/>
</dbReference>
<dbReference type="AGR" id="HGNC:10838"/>
<dbReference type="CTD" id="6461"/>
<dbReference type="DisGeNET" id="6461"/>
<dbReference type="GeneCards" id="SHB"/>
<dbReference type="HGNC" id="HGNC:10838">
    <property type="gene designation" value="SHB"/>
</dbReference>
<dbReference type="HPA" id="ENSG00000107338">
    <property type="expression patterns" value="Low tissue specificity"/>
</dbReference>
<dbReference type="MIM" id="600314">
    <property type="type" value="gene"/>
</dbReference>
<dbReference type="neXtProt" id="NX_Q15464"/>
<dbReference type="OpenTargets" id="ENSG00000107338"/>
<dbReference type="PharmGKB" id="PA35744"/>
<dbReference type="VEuPathDB" id="HostDB:ENSG00000107338"/>
<dbReference type="eggNOG" id="ENOG502RT81">
    <property type="taxonomic scope" value="Eukaryota"/>
</dbReference>
<dbReference type="GeneTree" id="ENSGT00940000161591"/>
<dbReference type="HOGENOM" id="CLU_029444_0_0_1"/>
<dbReference type="InParanoid" id="Q15464"/>
<dbReference type="OMA" id="XAILLMA"/>
<dbReference type="OrthoDB" id="5914531at2759"/>
<dbReference type="PAN-GO" id="Q15464">
    <property type="GO annotations" value="1 GO annotation based on evolutionary models"/>
</dbReference>
<dbReference type="PhylomeDB" id="Q15464"/>
<dbReference type="TreeFam" id="TF325799"/>
<dbReference type="PathwayCommons" id="Q15464"/>
<dbReference type="Reactome" id="R-HSA-4420097">
    <property type="pathway name" value="VEGFA-VEGFR2 Pathway"/>
</dbReference>
<dbReference type="SignaLink" id="Q15464"/>
<dbReference type="BioGRID-ORCS" id="6461">
    <property type="hits" value="27 hits in 1160 CRISPR screens"/>
</dbReference>
<dbReference type="ChiTaRS" id="SHB">
    <property type="organism name" value="human"/>
</dbReference>
<dbReference type="GeneWiki" id="SHB_(gene)"/>
<dbReference type="GenomeRNAi" id="6461"/>
<dbReference type="Pharos" id="Q15464">
    <property type="development level" value="Tbio"/>
</dbReference>
<dbReference type="PRO" id="PR:Q15464"/>
<dbReference type="Proteomes" id="UP000005640">
    <property type="component" value="Chromosome 9"/>
</dbReference>
<dbReference type="RNAct" id="Q15464">
    <property type="molecule type" value="protein"/>
</dbReference>
<dbReference type="Bgee" id="ENSG00000107338">
    <property type="expression patterns" value="Expressed in parotid gland and 182 other cell types or tissues"/>
</dbReference>
<dbReference type="GO" id="GO:0036464">
    <property type="term" value="C:cytoplasmic ribonucleoprotein granule"/>
    <property type="evidence" value="ECO:0000314"/>
    <property type="project" value="HPA"/>
</dbReference>
<dbReference type="GO" id="GO:0005829">
    <property type="term" value="C:cytosol"/>
    <property type="evidence" value="ECO:0000314"/>
    <property type="project" value="HPA"/>
</dbReference>
<dbReference type="GO" id="GO:0005654">
    <property type="term" value="C:nucleoplasm"/>
    <property type="evidence" value="ECO:0000314"/>
    <property type="project" value="HPA"/>
</dbReference>
<dbReference type="GO" id="GO:0005886">
    <property type="term" value="C:plasma membrane"/>
    <property type="evidence" value="ECO:0007669"/>
    <property type="project" value="UniProtKB-SubCell"/>
</dbReference>
<dbReference type="GO" id="GO:0001784">
    <property type="term" value="F:phosphotyrosine residue binding"/>
    <property type="evidence" value="ECO:0000353"/>
    <property type="project" value="CAFA"/>
</dbReference>
<dbReference type="GO" id="GO:0030159">
    <property type="term" value="F:signaling receptor complex adaptor activity"/>
    <property type="evidence" value="ECO:0007669"/>
    <property type="project" value="Ensembl"/>
</dbReference>
<dbReference type="GO" id="GO:0001525">
    <property type="term" value="P:angiogenesis"/>
    <property type="evidence" value="ECO:0007669"/>
    <property type="project" value="UniProtKB-KW"/>
</dbReference>
<dbReference type="GO" id="GO:0006915">
    <property type="term" value="P:apoptotic process"/>
    <property type="evidence" value="ECO:0007669"/>
    <property type="project" value="UniProtKB-KW"/>
</dbReference>
<dbReference type="GO" id="GO:0042100">
    <property type="term" value="P:B cell proliferation"/>
    <property type="evidence" value="ECO:0007669"/>
    <property type="project" value="Ensembl"/>
</dbReference>
<dbReference type="GO" id="GO:0071425">
    <property type="term" value="P:hematopoietic stem cell proliferation"/>
    <property type="evidence" value="ECO:0007669"/>
    <property type="project" value="Ensembl"/>
</dbReference>
<dbReference type="GO" id="GO:1900194">
    <property type="term" value="P:negative regulation of oocyte maturation"/>
    <property type="evidence" value="ECO:0007669"/>
    <property type="project" value="Ensembl"/>
</dbReference>
<dbReference type="GO" id="GO:0045931">
    <property type="term" value="P:positive regulation of mitotic cell cycle"/>
    <property type="evidence" value="ECO:0007669"/>
    <property type="project" value="Ensembl"/>
</dbReference>
<dbReference type="GO" id="GO:0045624">
    <property type="term" value="P:positive regulation of T-helper cell differentiation"/>
    <property type="evidence" value="ECO:0007669"/>
    <property type="project" value="Ensembl"/>
</dbReference>
<dbReference type="GO" id="GO:0007165">
    <property type="term" value="P:signal transduction"/>
    <property type="evidence" value="ECO:0000304"/>
    <property type="project" value="ProtInc"/>
</dbReference>
<dbReference type="GO" id="GO:0050852">
    <property type="term" value="P:T cell receptor signaling pathway"/>
    <property type="evidence" value="ECO:0007669"/>
    <property type="project" value="Ensembl"/>
</dbReference>
<dbReference type="CDD" id="cd10389">
    <property type="entry name" value="SH2_SHB"/>
    <property type="match status" value="1"/>
</dbReference>
<dbReference type="FunFam" id="3.30.505.10:FF:000021">
    <property type="entry name" value="Putative SH2 domain-containing adapter protein F"/>
    <property type="match status" value="1"/>
</dbReference>
<dbReference type="Gene3D" id="3.30.505.10">
    <property type="entry name" value="SH2 domain"/>
    <property type="match status" value="1"/>
</dbReference>
<dbReference type="InterPro" id="IPR000980">
    <property type="entry name" value="SH2"/>
</dbReference>
<dbReference type="InterPro" id="IPR036860">
    <property type="entry name" value="SH2_dom_sf"/>
</dbReference>
<dbReference type="InterPro" id="IPR051846">
    <property type="entry name" value="SH2_domain_adapters"/>
</dbReference>
<dbReference type="InterPro" id="IPR035045">
    <property type="entry name" value="SHB_SH2"/>
</dbReference>
<dbReference type="PANTHER" id="PTHR15127">
    <property type="entry name" value="HEAVYWEIGHT, ISOFORM A"/>
    <property type="match status" value="1"/>
</dbReference>
<dbReference type="PANTHER" id="PTHR15127:SF31">
    <property type="entry name" value="SH2 DOMAIN-CONTAINING ADAPTER PROTEIN B"/>
    <property type="match status" value="1"/>
</dbReference>
<dbReference type="Pfam" id="PF00017">
    <property type="entry name" value="SH2"/>
    <property type="match status" value="1"/>
</dbReference>
<dbReference type="PRINTS" id="PR00401">
    <property type="entry name" value="SH2DOMAIN"/>
</dbReference>
<dbReference type="SMART" id="SM00252">
    <property type="entry name" value="SH2"/>
    <property type="match status" value="1"/>
</dbReference>
<dbReference type="SUPFAM" id="SSF55550">
    <property type="entry name" value="SH2 domain"/>
    <property type="match status" value="1"/>
</dbReference>
<dbReference type="PROSITE" id="PS50001">
    <property type="entry name" value="SH2"/>
    <property type="match status" value="1"/>
</dbReference>
<protein>
    <recommendedName>
        <fullName>SH2 domain-containing adapter protein B</fullName>
    </recommendedName>
</protein>